<accession>A1C6F8</accession>
<evidence type="ECO:0000250" key="1"/>
<evidence type="ECO:0000255" key="2"/>
<evidence type="ECO:0000305" key="3"/>
<name>RM04_ASPCL</name>
<protein>
    <recommendedName>
        <fullName evidence="3">Large ribosomal subunit protein uL29m</fullName>
    </recommendedName>
    <alternativeName>
        <fullName>54S ribosomal protein L4, mitochondrial</fullName>
    </alternativeName>
</protein>
<proteinExistence type="inferred from homology"/>
<keyword id="KW-0496">Mitochondrion</keyword>
<keyword id="KW-1185">Reference proteome</keyword>
<keyword id="KW-0687">Ribonucleoprotein</keyword>
<keyword id="KW-0689">Ribosomal protein</keyword>
<keyword id="KW-0809">Transit peptide</keyword>
<feature type="transit peptide" description="Mitochondrion" evidence="2">
    <location>
        <begin position="1"/>
        <end status="unknown"/>
    </location>
</feature>
<feature type="chain" id="PRO_0000372390" description="Large ribosomal subunit protein uL29m">
    <location>
        <begin status="unknown"/>
        <end position="217"/>
    </location>
</feature>
<organism>
    <name type="scientific">Aspergillus clavatus (strain ATCC 1007 / CBS 513.65 / DSM 816 / NCTC 3887 / NRRL 1 / QM 1276 / 107)</name>
    <dbReference type="NCBI Taxonomy" id="344612"/>
    <lineage>
        <taxon>Eukaryota</taxon>
        <taxon>Fungi</taxon>
        <taxon>Dikarya</taxon>
        <taxon>Ascomycota</taxon>
        <taxon>Pezizomycotina</taxon>
        <taxon>Eurotiomycetes</taxon>
        <taxon>Eurotiomycetidae</taxon>
        <taxon>Eurotiales</taxon>
        <taxon>Aspergillaceae</taxon>
        <taxon>Aspergillus</taxon>
        <taxon>Aspergillus subgen. Fumigati</taxon>
    </lineage>
</organism>
<dbReference type="EMBL" id="DS027045">
    <property type="protein sequence ID" value="EAW13979.1"/>
    <property type="molecule type" value="Genomic_DNA"/>
</dbReference>
<dbReference type="RefSeq" id="XP_001275405.1">
    <property type="nucleotide sequence ID" value="XM_001275404.1"/>
</dbReference>
<dbReference type="SMR" id="A1C6F8"/>
<dbReference type="STRING" id="344612.A1C6F8"/>
<dbReference type="EnsemblFungi" id="EAW13979">
    <property type="protein sequence ID" value="EAW13979"/>
    <property type="gene ID" value="ACLA_070100"/>
</dbReference>
<dbReference type="GeneID" id="4707685"/>
<dbReference type="KEGG" id="act:ACLA_070100"/>
<dbReference type="VEuPathDB" id="FungiDB:ACLA_070100"/>
<dbReference type="eggNOG" id="KOG3331">
    <property type="taxonomic scope" value="Eukaryota"/>
</dbReference>
<dbReference type="HOGENOM" id="CLU_063281_0_0_1"/>
<dbReference type="OMA" id="YAHGRAW"/>
<dbReference type="OrthoDB" id="270763at2759"/>
<dbReference type="Proteomes" id="UP000006701">
    <property type="component" value="Unassembled WGS sequence"/>
</dbReference>
<dbReference type="GO" id="GO:0005762">
    <property type="term" value="C:mitochondrial large ribosomal subunit"/>
    <property type="evidence" value="ECO:0007669"/>
    <property type="project" value="TreeGrafter"/>
</dbReference>
<dbReference type="GO" id="GO:0003735">
    <property type="term" value="F:structural constituent of ribosome"/>
    <property type="evidence" value="ECO:0007669"/>
    <property type="project" value="InterPro"/>
</dbReference>
<dbReference type="GO" id="GO:0032543">
    <property type="term" value="P:mitochondrial translation"/>
    <property type="evidence" value="ECO:0007669"/>
    <property type="project" value="TreeGrafter"/>
</dbReference>
<dbReference type="Gene3D" id="6.10.330.20">
    <property type="match status" value="1"/>
</dbReference>
<dbReference type="InterPro" id="IPR038340">
    <property type="entry name" value="MRP-L47_sf"/>
</dbReference>
<dbReference type="InterPro" id="IPR010729">
    <property type="entry name" value="Ribosomal_uL29_mit"/>
</dbReference>
<dbReference type="PANTHER" id="PTHR21183:SF18">
    <property type="entry name" value="LARGE RIBOSOMAL SUBUNIT PROTEIN UL29M"/>
    <property type="match status" value="1"/>
</dbReference>
<dbReference type="PANTHER" id="PTHR21183">
    <property type="entry name" value="RIBOSOMAL PROTEIN L47, MITOCHONDRIAL-RELATED"/>
    <property type="match status" value="1"/>
</dbReference>
<dbReference type="Pfam" id="PF06984">
    <property type="entry name" value="MRP-L47"/>
    <property type="match status" value="1"/>
</dbReference>
<sequence>MHRQSIVRLTRQCGGLPLVELPPPYLAPSLHFSLIRSPVQCSSFSSTAVAAGRERDLSKSRGVSAIHRTGPKFRLGVSKYPLPKPVSPDALEKRYPTPDHGLWGFFPKDKSALSTPEYDVAHGRSWSIQELREKSWDDLHSLWWVCVKERNRIATSNLERQRLKAGYGEWEANDRDKVIRVTQKSIKHVLRERWYAWEDAQRLYKNGYRPQDEDNQE</sequence>
<comment type="subunit">
    <text evidence="1">Component of the mitochondrial large ribosomal subunit. Mature mitochondrial ribosomes consist of a small (37S) and a large (54S) subunit. The 37S subunit contains at least 33 different proteins and 1 molecule of RNA (15S). The 54S subunit contains at least 45 different proteins and 1 molecule of RNA (21S) (By similarity).</text>
</comment>
<comment type="subcellular location">
    <subcellularLocation>
        <location evidence="1">Mitochondrion</location>
    </subcellularLocation>
</comment>
<comment type="similarity">
    <text evidence="3">Belongs to the universal ribosomal protein uL29 family.</text>
</comment>
<gene>
    <name type="primary">mrpl4</name>
    <name type="ORF">ACLA_070100</name>
</gene>
<reference key="1">
    <citation type="journal article" date="2008" name="PLoS Genet.">
        <title>Genomic islands in the pathogenic filamentous fungus Aspergillus fumigatus.</title>
        <authorList>
            <person name="Fedorova N.D."/>
            <person name="Khaldi N."/>
            <person name="Joardar V.S."/>
            <person name="Maiti R."/>
            <person name="Amedeo P."/>
            <person name="Anderson M.J."/>
            <person name="Crabtree J."/>
            <person name="Silva J.C."/>
            <person name="Badger J.H."/>
            <person name="Albarraq A."/>
            <person name="Angiuoli S."/>
            <person name="Bussey H."/>
            <person name="Bowyer P."/>
            <person name="Cotty P.J."/>
            <person name="Dyer P.S."/>
            <person name="Egan A."/>
            <person name="Galens K."/>
            <person name="Fraser-Liggett C.M."/>
            <person name="Haas B.J."/>
            <person name="Inman J.M."/>
            <person name="Kent R."/>
            <person name="Lemieux S."/>
            <person name="Malavazi I."/>
            <person name="Orvis J."/>
            <person name="Roemer T."/>
            <person name="Ronning C.M."/>
            <person name="Sundaram J.P."/>
            <person name="Sutton G."/>
            <person name="Turner G."/>
            <person name="Venter J.C."/>
            <person name="White O.R."/>
            <person name="Whitty B.R."/>
            <person name="Youngman P."/>
            <person name="Wolfe K.H."/>
            <person name="Goldman G.H."/>
            <person name="Wortman J.R."/>
            <person name="Jiang B."/>
            <person name="Denning D.W."/>
            <person name="Nierman W.C."/>
        </authorList>
    </citation>
    <scope>NUCLEOTIDE SEQUENCE [LARGE SCALE GENOMIC DNA]</scope>
    <source>
        <strain>ATCC 1007 / CBS 513.65 / DSM 816 / NCTC 3887 / NRRL 1 / QM 1276 / 107</strain>
    </source>
</reference>